<name>NANR_SALG2</name>
<organism>
    <name type="scientific">Salmonella gallinarum (strain 287/91 / NCTC 13346)</name>
    <dbReference type="NCBI Taxonomy" id="550538"/>
    <lineage>
        <taxon>Bacteria</taxon>
        <taxon>Pseudomonadati</taxon>
        <taxon>Pseudomonadota</taxon>
        <taxon>Gammaproteobacteria</taxon>
        <taxon>Enterobacterales</taxon>
        <taxon>Enterobacteriaceae</taxon>
        <taxon>Salmonella</taxon>
    </lineage>
</organism>
<feature type="chain" id="PRO_1000139726" description="HTH-type transcriptional repressor NanR">
    <location>
        <begin position="1"/>
        <end position="263"/>
    </location>
</feature>
<feature type="domain" description="HTH gntR-type" evidence="1">
    <location>
        <begin position="30"/>
        <end position="98"/>
    </location>
</feature>
<feature type="DNA-binding region" description="H-T-H motif" evidence="1">
    <location>
        <begin position="58"/>
        <end position="77"/>
    </location>
</feature>
<feature type="region of interest" description="Disordered" evidence="2">
    <location>
        <begin position="1"/>
        <end position="25"/>
    </location>
</feature>
<comment type="function">
    <text evidence="1">Transcriptional repressor that controls expression of the genes required for the catabolism of sialic acids.</text>
</comment>
<comment type="similarity">
    <text evidence="1">Belongs to the NanR family.</text>
</comment>
<evidence type="ECO:0000255" key="1">
    <source>
        <dbReference type="HAMAP-Rule" id="MF_01236"/>
    </source>
</evidence>
<evidence type="ECO:0000256" key="2">
    <source>
        <dbReference type="SAM" id="MobiDB-lite"/>
    </source>
</evidence>
<proteinExistence type="inferred from homology"/>
<protein>
    <recommendedName>
        <fullName evidence="1">HTH-type transcriptional repressor NanR</fullName>
    </recommendedName>
</protein>
<reference key="1">
    <citation type="journal article" date="2008" name="Genome Res.">
        <title>Comparative genome analysis of Salmonella enteritidis PT4 and Salmonella gallinarum 287/91 provides insights into evolutionary and host adaptation pathways.</title>
        <authorList>
            <person name="Thomson N.R."/>
            <person name="Clayton D.J."/>
            <person name="Windhorst D."/>
            <person name="Vernikos G."/>
            <person name="Davidson S."/>
            <person name="Churcher C."/>
            <person name="Quail M.A."/>
            <person name="Stevens M."/>
            <person name="Jones M.A."/>
            <person name="Watson M."/>
            <person name="Barron A."/>
            <person name="Layton A."/>
            <person name="Pickard D."/>
            <person name="Kingsley R.A."/>
            <person name="Bignell A."/>
            <person name="Clark L."/>
            <person name="Harris B."/>
            <person name="Ormond D."/>
            <person name="Abdellah Z."/>
            <person name="Brooks K."/>
            <person name="Cherevach I."/>
            <person name="Chillingworth T."/>
            <person name="Woodward J."/>
            <person name="Norberczak H."/>
            <person name="Lord A."/>
            <person name="Arrowsmith C."/>
            <person name="Jagels K."/>
            <person name="Moule S."/>
            <person name="Mungall K."/>
            <person name="Saunders M."/>
            <person name="Whitehead S."/>
            <person name="Chabalgoity J.A."/>
            <person name="Maskell D."/>
            <person name="Humphreys T."/>
            <person name="Roberts M."/>
            <person name="Barrow P.A."/>
            <person name="Dougan G."/>
            <person name="Parkhill J."/>
        </authorList>
    </citation>
    <scope>NUCLEOTIDE SEQUENCE [LARGE SCALE GENOMIC DNA]</scope>
    <source>
        <strain>287/91 / NCTC 13346</strain>
    </source>
</reference>
<accession>B5RET8</accession>
<sequence length="263" mass="29803">MDVMNAFDSQAEDSPTSLGRSLRRRPLARKKLSEMVEEELEQMIRRHEFGEGEQLPSERELMAFFNVGRPSVREALAALKRKGLVQINNGERARVSRPSADTIISELSGMAKDFLTHPGGIAHFEQLRLFFESSLVRYAAEHATDEQIALLTKALEINSQSLDDNALFIRSDVEFHRVLAEIPGNPIFMAIHVALLDWLIAARPSVPDRELHEHNNVSYQQHIVIVDAIRQRDPDKADRALQTHLNSVSATWHALGKKSQKMR</sequence>
<keyword id="KW-0238">DNA-binding</keyword>
<keyword id="KW-0678">Repressor</keyword>
<keyword id="KW-0804">Transcription</keyword>
<keyword id="KW-0805">Transcription regulation</keyword>
<gene>
    <name evidence="1" type="primary">nanR</name>
    <name type="ordered locus">SG3230</name>
</gene>
<dbReference type="EMBL" id="AM933173">
    <property type="protein sequence ID" value="CAR39028.1"/>
    <property type="molecule type" value="Genomic_DNA"/>
</dbReference>
<dbReference type="RefSeq" id="WP_000382926.1">
    <property type="nucleotide sequence ID" value="NC_011274.1"/>
</dbReference>
<dbReference type="SMR" id="B5RET8"/>
<dbReference type="KEGG" id="seg:SG3230"/>
<dbReference type="HOGENOM" id="CLU_017584_9_1_6"/>
<dbReference type="Proteomes" id="UP000008321">
    <property type="component" value="Chromosome"/>
</dbReference>
<dbReference type="GO" id="GO:0003677">
    <property type="term" value="F:DNA binding"/>
    <property type="evidence" value="ECO:0007669"/>
    <property type="project" value="UniProtKB-KW"/>
</dbReference>
<dbReference type="GO" id="GO:0003700">
    <property type="term" value="F:DNA-binding transcription factor activity"/>
    <property type="evidence" value="ECO:0007669"/>
    <property type="project" value="UniProtKB-UniRule"/>
</dbReference>
<dbReference type="GO" id="GO:0045892">
    <property type="term" value="P:negative regulation of DNA-templated transcription"/>
    <property type="evidence" value="ECO:0007669"/>
    <property type="project" value="UniProtKB-UniRule"/>
</dbReference>
<dbReference type="CDD" id="cd07377">
    <property type="entry name" value="WHTH_GntR"/>
    <property type="match status" value="1"/>
</dbReference>
<dbReference type="FunFam" id="1.10.10.10:FF:000150">
    <property type="entry name" value="HTH-type transcriptional repressor NanR"/>
    <property type="match status" value="1"/>
</dbReference>
<dbReference type="Gene3D" id="1.20.120.530">
    <property type="entry name" value="GntR ligand-binding domain-like"/>
    <property type="match status" value="1"/>
</dbReference>
<dbReference type="Gene3D" id="1.10.10.10">
    <property type="entry name" value="Winged helix-like DNA-binding domain superfamily/Winged helix DNA-binding domain"/>
    <property type="match status" value="1"/>
</dbReference>
<dbReference type="HAMAP" id="MF_01236">
    <property type="entry name" value="HTH_NanR"/>
    <property type="match status" value="1"/>
</dbReference>
<dbReference type="InterPro" id="IPR011711">
    <property type="entry name" value="GntR_C"/>
</dbReference>
<dbReference type="InterPro" id="IPR008920">
    <property type="entry name" value="TF_FadR/GntR_C"/>
</dbReference>
<dbReference type="InterPro" id="IPR000524">
    <property type="entry name" value="Tscrpt_reg_HTH_GntR"/>
</dbReference>
<dbReference type="InterPro" id="IPR023730">
    <property type="entry name" value="Tscrpt_reg_NanR"/>
</dbReference>
<dbReference type="InterPro" id="IPR036388">
    <property type="entry name" value="WH-like_DNA-bd_sf"/>
</dbReference>
<dbReference type="InterPro" id="IPR036390">
    <property type="entry name" value="WH_DNA-bd_sf"/>
</dbReference>
<dbReference type="NCBIfam" id="NF003011">
    <property type="entry name" value="PRK03837.1"/>
    <property type="match status" value="1"/>
</dbReference>
<dbReference type="PANTHER" id="PTHR43537:SF53">
    <property type="entry name" value="HTH-TYPE TRANSCRIPTIONAL REPRESSOR NANR"/>
    <property type="match status" value="1"/>
</dbReference>
<dbReference type="PANTHER" id="PTHR43537">
    <property type="entry name" value="TRANSCRIPTIONAL REGULATOR, GNTR FAMILY"/>
    <property type="match status" value="1"/>
</dbReference>
<dbReference type="Pfam" id="PF07729">
    <property type="entry name" value="FCD"/>
    <property type="match status" value="1"/>
</dbReference>
<dbReference type="Pfam" id="PF00392">
    <property type="entry name" value="GntR"/>
    <property type="match status" value="1"/>
</dbReference>
<dbReference type="PRINTS" id="PR00035">
    <property type="entry name" value="HTHGNTR"/>
</dbReference>
<dbReference type="SMART" id="SM00895">
    <property type="entry name" value="FCD"/>
    <property type="match status" value="1"/>
</dbReference>
<dbReference type="SMART" id="SM00345">
    <property type="entry name" value="HTH_GNTR"/>
    <property type="match status" value="1"/>
</dbReference>
<dbReference type="SUPFAM" id="SSF48008">
    <property type="entry name" value="GntR ligand-binding domain-like"/>
    <property type="match status" value="1"/>
</dbReference>
<dbReference type="SUPFAM" id="SSF46785">
    <property type="entry name" value="Winged helix' DNA-binding domain"/>
    <property type="match status" value="1"/>
</dbReference>
<dbReference type="PROSITE" id="PS50949">
    <property type="entry name" value="HTH_GNTR"/>
    <property type="match status" value="1"/>
</dbReference>